<organism>
    <name type="scientific">Chlamydia trachomatis serovar A (strain ATCC VR-571B / DSM 19440 / HAR-13)</name>
    <dbReference type="NCBI Taxonomy" id="315277"/>
    <lineage>
        <taxon>Bacteria</taxon>
        <taxon>Pseudomonadati</taxon>
        <taxon>Chlamydiota</taxon>
        <taxon>Chlamydiia</taxon>
        <taxon>Chlamydiales</taxon>
        <taxon>Chlamydiaceae</taxon>
        <taxon>Chlamydia/Chlamydophila group</taxon>
        <taxon>Chlamydia</taxon>
    </lineage>
</organism>
<protein>
    <recommendedName>
        <fullName evidence="1">4-hydroxy-tetrahydrodipicolinate synthase</fullName>
        <shortName evidence="1">HTPA synthase</shortName>
        <ecNumber evidence="1">4.3.3.7</ecNumber>
    </recommendedName>
</protein>
<name>DAPA_CHLTA</name>
<reference key="1">
    <citation type="journal article" date="2005" name="Infect. Immun.">
        <title>Comparative genomic analysis of Chlamydia trachomatis oculotropic and genitotropic strains.</title>
        <authorList>
            <person name="Carlson J.H."/>
            <person name="Porcella S.F."/>
            <person name="McClarty G."/>
            <person name="Caldwell H.D."/>
        </authorList>
    </citation>
    <scope>NUCLEOTIDE SEQUENCE [LARGE SCALE GENOMIC DNA]</scope>
    <source>
        <strain>ATCC VR-571B / DSM 19440 / HAR-13</strain>
    </source>
</reference>
<gene>
    <name evidence="1" type="primary">dapA</name>
    <name type="ordered locus">CTA_0393</name>
</gene>
<sequence length="286" mass="31291">MSVLGACITPFKADLSIDFAALESVVRSQEHAGNGIILFGSTGEGLSLTYEEKLSILSFVSTLNLNVPIFVGVTATSVQETMSWIDFAQQWPIDGFLVPTPLYTRPGLNGQKAWFDRILSVSRKPIILYNNPIRTGVSLYPEVVKSFVSHPLCIGVKDSGGSAQACELFAESGLRVFCGDDNLWPDMRLSGASGVISVLANVWPELARDYVAQGRPIEAWKKVCSWLNLSTNPLGIKALMAAQKMIECDAVRPPLSIRDLQRRDELADILACRATLQTELLSVCRQ</sequence>
<feature type="chain" id="PRO_1000050176" description="4-hydroxy-tetrahydrodipicolinate synthase">
    <location>
        <begin position="1"/>
        <end position="286"/>
    </location>
</feature>
<feature type="active site" description="Proton donor/acceptor" evidence="1">
    <location>
        <position position="129"/>
    </location>
</feature>
<feature type="active site" description="Schiff-base intermediate with substrate" evidence="1">
    <location>
        <position position="157"/>
    </location>
</feature>
<feature type="binding site" evidence="1">
    <location>
        <position position="42"/>
    </location>
    <ligand>
        <name>pyruvate</name>
        <dbReference type="ChEBI" id="CHEBI:15361"/>
    </ligand>
</feature>
<feature type="binding site" evidence="1">
    <location>
        <position position="196"/>
    </location>
    <ligand>
        <name>pyruvate</name>
        <dbReference type="ChEBI" id="CHEBI:15361"/>
    </ligand>
</feature>
<feature type="site" description="Part of a proton relay during catalysis" evidence="1">
    <location>
        <position position="41"/>
    </location>
</feature>
<feature type="site" description="Part of a proton relay during catalysis" evidence="1">
    <location>
        <position position="103"/>
    </location>
</feature>
<comment type="function">
    <text evidence="1">Catalyzes the condensation of (S)-aspartate-beta-semialdehyde [(S)-ASA] and pyruvate to 4-hydroxy-tetrahydrodipicolinate (HTPA).</text>
</comment>
<comment type="catalytic activity">
    <reaction evidence="1">
        <text>L-aspartate 4-semialdehyde + pyruvate = (2S,4S)-4-hydroxy-2,3,4,5-tetrahydrodipicolinate + H2O + H(+)</text>
        <dbReference type="Rhea" id="RHEA:34171"/>
        <dbReference type="ChEBI" id="CHEBI:15361"/>
        <dbReference type="ChEBI" id="CHEBI:15377"/>
        <dbReference type="ChEBI" id="CHEBI:15378"/>
        <dbReference type="ChEBI" id="CHEBI:67139"/>
        <dbReference type="ChEBI" id="CHEBI:537519"/>
        <dbReference type="EC" id="4.3.3.7"/>
    </reaction>
</comment>
<comment type="pathway">
    <text evidence="1">Amino-acid biosynthesis; L-lysine biosynthesis via DAP pathway; (S)-tetrahydrodipicolinate from L-aspartate: step 3/4.</text>
</comment>
<comment type="subunit">
    <text evidence="1">Homotetramer; dimer of dimers.</text>
</comment>
<comment type="subcellular location">
    <subcellularLocation>
        <location evidence="1">Cytoplasm</location>
    </subcellularLocation>
</comment>
<comment type="similarity">
    <text evidence="1">Belongs to the DapA family.</text>
</comment>
<comment type="caution">
    <text evidence="2">Was originally thought to be a dihydrodipicolinate synthase (DHDPS), catalyzing the condensation of (S)-aspartate-beta-semialdehyde [(S)-ASA] and pyruvate to dihydrodipicolinate (DHDP). However, it was shown in E.coli that the product of the enzymatic reaction is not dihydrodipicolinate but in fact (4S)-4-hydroxy-2,3,4,5-tetrahydro-(2S)-dipicolinic acid (HTPA), and that the consecutive dehydration reaction leading to DHDP is not spontaneous but catalyzed by DapB.</text>
</comment>
<keyword id="KW-0028">Amino-acid biosynthesis</keyword>
<keyword id="KW-0963">Cytoplasm</keyword>
<keyword id="KW-0220">Diaminopimelate biosynthesis</keyword>
<keyword id="KW-0456">Lyase</keyword>
<keyword id="KW-0457">Lysine biosynthesis</keyword>
<keyword id="KW-0704">Schiff base</keyword>
<evidence type="ECO:0000255" key="1">
    <source>
        <dbReference type="HAMAP-Rule" id="MF_00418"/>
    </source>
</evidence>
<evidence type="ECO:0000305" key="2"/>
<dbReference type="EC" id="4.3.3.7" evidence="1"/>
<dbReference type="EMBL" id="CP000051">
    <property type="protein sequence ID" value="AAX50627.1"/>
    <property type="molecule type" value="Genomic_DNA"/>
</dbReference>
<dbReference type="RefSeq" id="WP_009871714.1">
    <property type="nucleotide sequence ID" value="NC_007429.1"/>
</dbReference>
<dbReference type="SMR" id="Q3KLZ5"/>
<dbReference type="KEGG" id="cta:CTA_0393"/>
<dbReference type="HOGENOM" id="CLU_049343_7_0_0"/>
<dbReference type="UniPathway" id="UPA00034">
    <property type="reaction ID" value="UER00017"/>
</dbReference>
<dbReference type="Proteomes" id="UP000002532">
    <property type="component" value="Chromosome"/>
</dbReference>
<dbReference type="GO" id="GO:0005829">
    <property type="term" value="C:cytosol"/>
    <property type="evidence" value="ECO:0007669"/>
    <property type="project" value="TreeGrafter"/>
</dbReference>
<dbReference type="GO" id="GO:0008840">
    <property type="term" value="F:4-hydroxy-tetrahydrodipicolinate synthase activity"/>
    <property type="evidence" value="ECO:0007669"/>
    <property type="project" value="UniProtKB-UniRule"/>
</dbReference>
<dbReference type="GO" id="GO:0019877">
    <property type="term" value="P:diaminopimelate biosynthetic process"/>
    <property type="evidence" value="ECO:0007669"/>
    <property type="project" value="UniProtKB-UniRule"/>
</dbReference>
<dbReference type="GO" id="GO:0009089">
    <property type="term" value="P:lysine biosynthetic process via diaminopimelate"/>
    <property type="evidence" value="ECO:0007669"/>
    <property type="project" value="UniProtKB-UniRule"/>
</dbReference>
<dbReference type="CDD" id="cd00408">
    <property type="entry name" value="DHDPS-like"/>
    <property type="match status" value="1"/>
</dbReference>
<dbReference type="Gene3D" id="3.20.20.70">
    <property type="entry name" value="Aldolase class I"/>
    <property type="match status" value="1"/>
</dbReference>
<dbReference type="HAMAP" id="MF_00418">
    <property type="entry name" value="DapA"/>
    <property type="match status" value="1"/>
</dbReference>
<dbReference type="InterPro" id="IPR013785">
    <property type="entry name" value="Aldolase_TIM"/>
</dbReference>
<dbReference type="InterPro" id="IPR005263">
    <property type="entry name" value="DapA"/>
</dbReference>
<dbReference type="InterPro" id="IPR002220">
    <property type="entry name" value="DapA-like"/>
</dbReference>
<dbReference type="InterPro" id="IPR020625">
    <property type="entry name" value="Schiff_base-form_aldolases_AS"/>
</dbReference>
<dbReference type="InterPro" id="IPR020624">
    <property type="entry name" value="Schiff_base-form_aldolases_CS"/>
</dbReference>
<dbReference type="NCBIfam" id="TIGR00674">
    <property type="entry name" value="dapA"/>
    <property type="match status" value="1"/>
</dbReference>
<dbReference type="PANTHER" id="PTHR12128:SF66">
    <property type="entry name" value="4-HYDROXY-2-OXOGLUTARATE ALDOLASE, MITOCHONDRIAL"/>
    <property type="match status" value="1"/>
</dbReference>
<dbReference type="PANTHER" id="PTHR12128">
    <property type="entry name" value="DIHYDRODIPICOLINATE SYNTHASE"/>
    <property type="match status" value="1"/>
</dbReference>
<dbReference type="Pfam" id="PF00701">
    <property type="entry name" value="DHDPS"/>
    <property type="match status" value="1"/>
</dbReference>
<dbReference type="PIRSF" id="PIRSF001365">
    <property type="entry name" value="DHDPS"/>
    <property type="match status" value="1"/>
</dbReference>
<dbReference type="PRINTS" id="PR00146">
    <property type="entry name" value="DHPICSNTHASE"/>
</dbReference>
<dbReference type="SMART" id="SM01130">
    <property type="entry name" value="DHDPS"/>
    <property type="match status" value="1"/>
</dbReference>
<dbReference type="SUPFAM" id="SSF51569">
    <property type="entry name" value="Aldolase"/>
    <property type="match status" value="1"/>
</dbReference>
<dbReference type="PROSITE" id="PS00665">
    <property type="entry name" value="DHDPS_1"/>
    <property type="match status" value="1"/>
</dbReference>
<dbReference type="PROSITE" id="PS00666">
    <property type="entry name" value="DHDPS_2"/>
    <property type="match status" value="1"/>
</dbReference>
<accession>Q3KLZ5</accession>
<proteinExistence type="inferred from homology"/>